<organism>
    <name type="scientific">Streptomyces violaceus</name>
    <name type="common">Streptomyces venezuelae</name>
    <dbReference type="NCBI Taxonomy" id="1936"/>
    <lineage>
        <taxon>Bacteria</taxon>
        <taxon>Bacillati</taxon>
        <taxon>Actinomycetota</taxon>
        <taxon>Actinomycetes</taxon>
        <taxon>Kitasatosporales</taxon>
        <taxon>Streptomycetaceae</taxon>
        <taxon>Streptomyces</taxon>
    </lineage>
</organism>
<proteinExistence type="evidence at protein level"/>
<feature type="signal peptide">
    <location>
        <begin position="1"/>
        <end position="28"/>
    </location>
</feature>
<feature type="chain" id="PRO_0000033278" description="Subtilisin inhibitor">
    <location>
        <begin position="29"/>
        <end position="146"/>
    </location>
</feature>
<feature type="site" description="Reactive bond" evidence="1">
    <location>
        <begin position="104"/>
        <end position="105"/>
    </location>
</feature>
<feature type="disulfide bond" evidence="1">
    <location>
        <begin position="65"/>
        <end position="80"/>
    </location>
</feature>
<feature type="disulfide bond" evidence="1">
    <location>
        <begin position="102"/>
        <end position="132"/>
    </location>
</feature>
<evidence type="ECO:0000250" key="1"/>
<evidence type="ECO:0000305" key="2"/>
<name>SSI_STRVL</name>
<keyword id="KW-0903">Direct protein sequencing</keyword>
<keyword id="KW-1015">Disulfide bond</keyword>
<keyword id="KW-0646">Protease inhibitor</keyword>
<keyword id="KW-0964">Secreted</keyword>
<keyword id="KW-0722">Serine protease inhibitor</keyword>
<keyword id="KW-0732">Signal</keyword>
<comment type="function">
    <text evidence="2">Strong inhibitor of bacterial serine proteases such as subtilisin.</text>
</comment>
<comment type="subunit">
    <text evidence="1">Homodimer.</text>
</comment>
<comment type="subcellular location">
    <subcellularLocation>
        <location evidence="1">Secreted</location>
    </subcellularLocation>
</comment>
<comment type="similarity">
    <text evidence="2">Belongs to the protease inhibitor I16 (SSI) family.</text>
</comment>
<reference key="1">
    <citation type="journal article" date="1998" name="DNA Seq.">
        <title>Molecular characterization of a novel subtilisin inhibitor protein produced by Streptomyces venezuelae CBS762.70.</title>
        <authorList>
            <person name="Van Mellaert L."/>
            <person name="Lammertyn E."/>
            <person name="Schacht S."/>
            <person name="Proost P."/>
            <person name="Van Damme J."/>
            <person name="Wroblowski B."/>
            <person name="Anne J."/>
            <person name="Scarcez T."/>
            <person name="Sablon E."/>
            <person name="Raeymaeckers J."/>
            <person name="Van Broekhoven A."/>
        </authorList>
    </citation>
    <scope>NUCLEOTIDE SEQUENCE [GENOMIC DNA]</scope>
    <scope>PARTIAL PROTEIN SEQUENCE</scope>
    <source>
        <strain>CBS 762.70</strain>
    </source>
</reference>
<gene>
    <name type="primary">vsi</name>
    <name type="synonym">ssi</name>
</gene>
<dbReference type="EMBL" id="X98019">
    <property type="protein sequence ID" value="CAA66652.1"/>
    <property type="molecule type" value="Genomic_DNA"/>
</dbReference>
<dbReference type="SMR" id="O06871"/>
<dbReference type="MEROPS" id="I16.016"/>
<dbReference type="GO" id="GO:0005576">
    <property type="term" value="C:extracellular region"/>
    <property type="evidence" value="ECO:0007669"/>
    <property type="project" value="UniProtKB-SubCell"/>
</dbReference>
<dbReference type="GO" id="GO:0004867">
    <property type="term" value="F:serine-type endopeptidase inhibitor activity"/>
    <property type="evidence" value="ECO:0007669"/>
    <property type="project" value="UniProtKB-UniRule"/>
</dbReference>
<dbReference type="Gene3D" id="3.30.350.10">
    <property type="entry name" value="Subtilisin inhibitor-like"/>
    <property type="match status" value="1"/>
</dbReference>
<dbReference type="HAMAP" id="MF_00778">
    <property type="entry name" value="SSI"/>
    <property type="match status" value="1"/>
</dbReference>
<dbReference type="InterPro" id="IPR000691">
    <property type="entry name" value="Prot_inh_I16_SSI"/>
</dbReference>
<dbReference type="InterPro" id="IPR020054">
    <property type="entry name" value="Prot_inh_SSI_I16_CS"/>
</dbReference>
<dbReference type="InterPro" id="IPR023549">
    <property type="entry name" value="Subtilisin_inhibitor"/>
</dbReference>
<dbReference type="InterPro" id="IPR036819">
    <property type="entry name" value="Subtilisin_inhibitor-like_sf"/>
</dbReference>
<dbReference type="Pfam" id="PF00720">
    <property type="entry name" value="SSI"/>
    <property type="match status" value="1"/>
</dbReference>
<dbReference type="PRINTS" id="PR00294">
    <property type="entry name" value="SSBTLNINHBTR"/>
</dbReference>
<dbReference type="SUPFAM" id="SSF55399">
    <property type="entry name" value="Subtilisin inhibitor"/>
    <property type="match status" value="1"/>
</dbReference>
<dbReference type="PROSITE" id="PS00999">
    <property type="entry name" value="SSI"/>
    <property type="match status" value="1"/>
</dbReference>
<accession>O06871</accession>
<protein>
    <recommendedName>
        <fullName>Subtilisin inhibitor</fullName>
    </recommendedName>
</protein>
<sequence>MRRTLKAVGAAAAAATCVLAATAGTAQAEAPKAESLYAPSALVLTVGQGENAESAAVERAVTLTCAPRPGGTHPSAAAACAELAKVNGQFARLVGASSDAICTKEWRPVTVSVVGAWNGKHVNWTSTFANQCTMKAGLGEGAALTF</sequence>